<name>BPT_CAMJE</name>
<keyword id="KW-0012">Acyltransferase</keyword>
<keyword id="KW-0963">Cytoplasm</keyword>
<keyword id="KW-1185">Reference proteome</keyword>
<keyword id="KW-0808">Transferase</keyword>
<proteinExistence type="inferred from homology"/>
<comment type="function">
    <text evidence="1">Functions in the N-end rule pathway of protein degradation where it conjugates Leu from its aminoacyl-tRNA to the N-termini of proteins containing an N-terminal aspartate or glutamate.</text>
</comment>
<comment type="catalytic activity">
    <reaction evidence="1">
        <text>N-terminal L-glutamyl-[protein] + L-leucyl-tRNA(Leu) = N-terminal L-leucyl-L-glutamyl-[protein] + tRNA(Leu) + H(+)</text>
        <dbReference type="Rhea" id="RHEA:50412"/>
        <dbReference type="Rhea" id="RHEA-COMP:9613"/>
        <dbReference type="Rhea" id="RHEA-COMP:9622"/>
        <dbReference type="Rhea" id="RHEA-COMP:12664"/>
        <dbReference type="Rhea" id="RHEA-COMP:12668"/>
        <dbReference type="ChEBI" id="CHEBI:15378"/>
        <dbReference type="ChEBI" id="CHEBI:64721"/>
        <dbReference type="ChEBI" id="CHEBI:78442"/>
        <dbReference type="ChEBI" id="CHEBI:78494"/>
        <dbReference type="ChEBI" id="CHEBI:133041"/>
        <dbReference type="EC" id="2.3.2.29"/>
    </reaction>
</comment>
<comment type="catalytic activity">
    <reaction evidence="1">
        <text>N-terminal L-aspartyl-[protein] + L-leucyl-tRNA(Leu) = N-terminal L-leucyl-L-aspartyl-[protein] + tRNA(Leu) + H(+)</text>
        <dbReference type="Rhea" id="RHEA:50420"/>
        <dbReference type="Rhea" id="RHEA-COMP:9613"/>
        <dbReference type="Rhea" id="RHEA-COMP:9622"/>
        <dbReference type="Rhea" id="RHEA-COMP:12669"/>
        <dbReference type="Rhea" id="RHEA-COMP:12674"/>
        <dbReference type="ChEBI" id="CHEBI:15378"/>
        <dbReference type="ChEBI" id="CHEBI:64720"/>
        <dbReference type="ChEBI" id="CHEBI:78442"/>
        <dbReference type="ChEBI" id="CHEBI:78494"/>
        <dbReference type="ChEBI" id="CHEBI:133042"/>
        <dbReference type="EC" id="2.3.2.29"/>
    </reaction>
</comment>
<comment type="subcellular location">
    <subcellularLocation>
        <location evidence="1">Cytoplasm</location>
    </subcellularLocation>
</comment>
<comment type="similarity">
    <text evidence="1">Belongs to the R-transferase family. Bpt subfamily.</text>
</comment>
<accession>Q9PNQ6</accession>
<accession>Q0P9L7</accession>
<organism>
    <name type="scientific">Campylobacter jejuni subsp. jejuni serotype O:2 (strain ATCC 700819 / NCTC 11168)</name>
    <dbReference type="NCBI Taxonomy" id="192222"/>
    <lineage>
        <taxon>Bacteria</taxon>
        <taxon>Pseudomonadati</taxon>
        <taxon>Campylobacterota</taxon>
        <taxon>Epsilonproteobacteria</taxon>
        <taxon>Campylobacterales</taxon>
        <taxon>Campylobacteraceae</taxon>
        <taxon>Campylobacter</taxon>
    </lineage>
</organism>
<evidence type="ECO:0000255" key="1">
    <source>
        <dbReference type="HAMAP-Rule" id="MF_00689"/>
    </source>
</evidence>
<dbReference type="EC" id="2.3.2.29" evidence="1"/>
<dbReference type="EMBL" id="AL111168">
    <property type="protein sequence ID" value="CAL35153.1"/>
    <property type="molecule type" value="Genomic_DNA"/>
</dbReference>
<dbReference type="PIR" id="H81305">
    <property type="entry name" value="H81305"/>
</dbReference>
<dbReference type="RefSeq" id="WP_002853863.1">
    <property type="nucleotide sequence ID" value="NZ_SZUC01000001.1"/>
</dbReference>
<dbReference type="RefSeq" id="YP_002344430.1">
    <property type="nucleotide sequence ID" value="NC_002163.1"/>
</dbReference>
<dbReference type="SMR" id="Q9PNQ6"/>
<dbReference type="IntAct" id="Q9PNQ6">
    <property type="interactions" value="3"/>
</dbReference>
<dbReference type="STRING" id="192222.Cj1035c"/>
<dbReference type="PaxDb" id="192222-Cj1035c"/>
<dbReference type="EnsemblBacteria" id="CAL35153">
    <property type="protein sequence ID" value="CAL35153"/>
    <property type="gene ID" value="Cj1035c"/>
</dbReference>
<dbReference type="GeneID" id="905327"/>
<dbReference type="KEGG" id="cje:Cj1035c"/>
<dbReference type="PATRIC" id="fig|192222.6.peg.1017"/>
<dbReference type="eggNOG" id="COG2935">
    <property type="taxonomic scope" value="Bacteria"/>
</dbReference>
<dbReference type="HOGENOM" id="CLU_077607_0_0_7"/>
<dbReference type="OrthoDB" id="9782022at2"/>
<dbReference type="Proteomes" id="UP000000799">
    <property type="component" value="Chromosome"/>
</dbReference>
<dbReference type="GO" id="GO:0005737">
    <property type="term" value="C:cytoplasm"/>
    <property type="evidence" value="ECO:0007669"/>
    <property type="project" value="UniProtKB-SubCell"/>
</dbReference>
<dbReference type="GO" id="GO:0004057">
    <property type="term" value="F:arginyl-tRNA--protein transferase activity"/>
    <property type="evidence" value="ECO:0007669"/>
    <property type="project" value="InterPro"/>
</dbReference>
<dbReference type="GO" id="GO:0008914">
    <property type="term" value="F:leucyl-tRNA--protein transferase activity"/>
    <property type="evidence" value="ECO:0007669"/>
    <property type="project" value="UniProtKB-UniRule"/>
</dbReference>
<dbReference type="GO" id="GO:0071596">
    <property type="term" value="P:ubiquitin-dependent protein catabolic process via the N-end rule pathway"/>
    <property type="evidence" value="ECO:0007669"/>
    <property type="project" value="InterPro"/>
</dbReference>
<dbReference type="HAMAP" id="MF_00689">
    <property type="entry name" value="Bpt"/>
    <property type="match status" value="1"/>
</dbReference>
<dbReference type="InterPro" id="IPR016181">
    <property type="entry name" value="Acyl_CoA_acyltransferase"/>
</dbReference>
<dbReference type="InterPro" id="IPR017138">
    <property type="entry name" value="Asp_Glu_LeuTrfase"/>
</dbReference>
<dbReference type="InterPro" id="IPR030700">
    <property type="entry name" value="N-end_Aminoacyl_Trfase"/>
</dbReference>
<dbReference type="InterPro" id="IPR007472">
    <property type="entry name" value="N-end_Aminoacyl_Trfase_C"/>
</dbReference>
<dbReference type="InterPro" id="IPR007471">
    <property type="entry name" value="N-end_Aminoacyl_Trfase_N"/>
</dbReference>
<dbReference type="NCBIfam" id="NF002344">
    <property type="entry name" value="PRK01305.2-1"/>
    <property type="match status" value="1"/>
</dbReference>
<dbReference type="NCBIfam" id="NF002346">
    <property type="entry name" value="PRK01305.2-3"/>
    <property type="match status" value="1"/>
</dbReference>
<dbReference type="PANTHER" id="PTHR21367">
    <property type="entry name" value="ARGININE-TRNA-PROTEIN TRANSFERASE 1"/>
    <property type="match status" value="1"/>
</dbReference>
<dbReference type="PANTHER" id="PTHR21367:SF1">
    <property type="entry name" value="ARGINYL-TRNA--PROTEIN TRANSFERASE 1"/>
    <property type="match status" value="1"/>
</dbReference>
<dbReference type="Pfam" id="PF04377">
    <property type="entry name" value="ATE_C"/>
    <property type="match status" value="1"/>
</dbReference>
<dbReference type="Pfam" id="PF04376">
    <property type="entry name" value="ATE_N"/>
    <property type="match status" value="1"/>
</dbReference>
<dbReference type="PIRSF" id="PIRSF037208">
    <property type="entry name" value="ATE_pro_prd"/>
    <property type="match status" value="1"/>
</dbReference>
<dbReference type="SUPFAM" id="SSF55729">
    <property type="entry name" value="Acyl-CoA N-acyltransferases (Nat)"/>
    <property type="match status" value="1"/>
</dbReference>
<protein>
    <recommendedName>
        <fullName evidence="1">Aspartate/glutamate leucyltransferase</fullName>
        <ecNumber evidence="1">2.3.2.29</ecNumber>
    </recommendedName>
</protein>
<feature type="chain" id="PRO_0000195101" description="Aspartate/glutamate leucyltransferase">
    <location>
        <begin position="1"/>
        <end position="239"/>
    </location>
</feature>
<gene>
    <name evidence="1" type="primary">bpt</name>
    <name type="ordered locus">Cj1035c</name>
</gene>
<reference key="1">
    <citation type="journal article" date="2000" name="Nature">
        <title>The genome sequence of the food-borne pathogen Campylobacter jejuni reveals hypervariable sequences.</title>
        <authorList>
            <person name="Parkhill J."/>
            <person name="Wren B.W."/>
            <person name="Mungall K.L."/>
            <person name="Ketley J.M."/>
            <person name="Churcher C.M."/>
            <person name="Basham D."/>
            <person name="Chillingworth T."/>
            <person name="Davies R.M."/>
            <person name="Feltwell T."/>
            <person name="Holroyd S."/>
            <person name="Jagels K."/>
            <person name="Karlyshev A.V."/>
            <person name="Moule S."/>
            <person name="Pallen M.J."/>
            <person name="Penn C.W."/>
            <person name="Quail M.A."/>
            <person name="Rajandream M.A."/>
            <person name="Rutherford K.M."/>
            <person name="van Vliet A.H.M."/>
            <person name="Whitehead S."/>
            <person name="Barrell B.G."/>
        </authorList>
    </citation>
    <scope>NUCLEOTIDE SEQUENCE [LARGE SCALE GENOMIC DNA]</scope>
    <source>
        <strain>ATCC 700819 / NCTC 11168</strain>
    </source>
</reference>
<sequence>MLEIGFCTLEDQCPYLKDKRSRIEYKYIENCPKEINNELIKRGWRRFGRYFSRPICKDCDECLSLRILVNEYNFSRSERRVVNKNINTKVILRTPNLSNEHLFLYDKYHRFMEEKKNWKRYDLSFKQYYNLYVDGFMNFGYELAFYIEDKLVCVDLIDILEDGISSIYCFYDPDFSYFSLGKFSLLNEIQIAKKMNLDYIYLGYFVKKCQSLSYKADYTPNEILKGTKELFENEVLWEK</sequence>